<name>RS13_CHLAA</name>
<reference key="1">
    <citation type="journal article" date="2011" name="BMC Genomics">
        <title>Complete genome sequence of the filamentous anoxygenic phototrophic bacterium Chloroflexus aurantiacus.</title>
        <authorList>
            <person name="Tang K.H."/>
            <person name="Barry K."/>
            <person name="Chertkov O."/>
            <person name="Dalin E."/>
            <person name="Han C.S."/>
            <person name="Hauser L.J."/>
            <person name="Honchak B.M."/>
            <person name="Karbach L.E."/>
            <person name="Land M.L."/>
            <person name="Lapidus A."/>
            <person name="Larimer F.W."/>
            <person name="Mikhailova N."/>
            <person name="Pitluck S."/>
            <person name="Pierson B.K."/>
            <person name="Blankenship R.E."/>
        </authorList>
    </citation>
    <scope>NUCLEOTIDE SEQUENCE [LARGE SCALE GENOMIC DNA]</scope>
    <source>
        <strain>ATCC 29366 / DSM 635 / J-10-fl</strain>
    </source>
</reference>
<evidence type="ECO:0000255" key="1">
    <source>
        <dbReference type="HAMAP-Rule" id="MF_01315"/>
    </source>
</evidence>
<evidence type="ECO:0000256" key="2">
    <source>
        <dbReference type="SAM" id="MobiDB-lite"/>
    </source>
</evidence>
<evidence type="ECO:0000305" key="3"/>
<feature type="chain" id="PRO_1000086232" description="Small ribosomal subunit protein uS13">
    <location>
        <begin position="1"/>
        <end position="127"/>
    </location>
</feature>
<feature type="region of interest" description="Disordered" evidence="2">
    <location>
        <begin position="93"/>
        <end position="127"/>
    </location>
</feature>
<accession>A9WH90</accession>
<comment type="function">
    <text evidence="1">Located at the top of the head of the 30S subunit, it contacts several helices of the 16S rRNA. In the 70S ribosome it contacts the 23S rRNA (bridge B1a) and protein L5 of the 50S subunit (bridge B1b), connecting the 2 subunits; these bridges are implicated in subunit movement. Contacts the tRNAs in the A and P-sites.</text>
</comment>
<comment type="subunit">
    <text evidence="1">Part of the 30S ribosomal subunit. Forms a loose heterodimer with protein S19. Forms two bridges to the 50S subunit in the 70S ribosome.</text>
</comment>
<comment type="similarity">
    <text evidence="1">Belongs to the universal ribosomal protein uS13 family.</text>
</comment>
<keyword id="KW-1185">Reference proteome</keyword>
<keyword id="KW-0687">Ribonucleoprotein</keyword>
<keyword id="KW-0689">Ribosomal protein</keyword>
<keyword id="KW-0694">RNA-binding</keyword>
<keyword id="KW-0699">rRNA-binding</keyword>
<keyword id="KW-0820">tRNA-binding</keyword>
<organism>
    <name type="scientific">Chloroflexus aurantiacus (strain ATCC 29366 / DSM 635 / J-10-fl)</name>
    <dbReference type="NCBI Taxonomy" id="324602"/>
    <lineage>
        <taxon>Bacteria</taxon>
        <taxon>Bacillati</taxon>
        <taxon>Chloroflexota</taxon>
        <taxon>Chloroflexia</taxon>
        <taxon>Chloroflexales</taxon>
        <taxon>Chloroflexineae</taxon>
        <taxon>Chloroflexaceae</taxon>
        <taxon>Chloroflexus</taxon>
    </lineage>
</organism>
<gene>
    <name evidence="1" type="primary">rpsM</name>
    <name type="ordered locus">Caur_2393</name>
</gene>
<protein>
    <recommendedName>
        <fullName evidence="1">Small ribosomal subunit protein uS13</fullName>
    </recommendedName>
    <alternativeName>
        <fullName evidence="3">30S ribosomal protein S13</fullName>
    </alternativeName>
</protein>
<dbReference type="EMBL" id="CP000909">
    <property type="protein sequence ID" value="ABY35602.1"/>
    <property type="molecule type" value="Genomic_DNA"/>
</dbReference>
<dbReference type="RefSeq" id="WP_012258255.1">
    <property type="nucleotide sequence ID" value="NC_010175.1"/>
</dbReference>
<dbReference type="RefSeq" id="YP_001635991.1">
    <property type="nucleotide sequence ID" value="NC_010175.1"/>
</dbReference>
<dbReference type="SMR" id="A9WH90"/>
<dbReference type="FunCoup" id="A9WH90">
    <property type="interactions" value="521"/>
</dbReference>
<dbReference type="STRING" id="324602.Caur_2393"/>
<dbReference type="EnsemblBacteria" id="ABY35602">
    <property type="protein sequence ID" value="ABY35602"/>
    <property type="gene ID" value="Caur_2393"/>
</dbReference>
<dbReference type="KEGG" id="cau:Caur_2393"/>
<dbReference type="PATRIC" id="fig|324602.8.peg.2707"/>
<dbReference type="eggNOG" id="COG0099">
    <property type="taxonomic scope" value="Bacteria"/>
</dbReference>
<dbReference type="HOGENOM" id="CLU_103849_1_2_0"/>
<dbReference type="InParanoid" id="A9WH90"/>
<dbReference type="Proteomes" id="UP000002008">
    <property type="component" value="Chromosome"/>
</dbReference>
<dbReference type="GO" id="GO:0005829">
    <property type="term" value="C:cytosol"/>
    <property type="evidence" value="ECO:0000318"/>
    <property type="project" value="GO_Central"/>
</dbReference>
<dbReference type="GO" id="GO:0015935">
    <property type="term" value="C:small ribosomal subunit"/>
    <property type="evidence" value="ECO:0000318"/>
    <property type="project" value="GO_Central"/>
</dbReference>
<dbReference type="GO" id="GO:0019843">
    <property type="term" value="F:rRNA binding"/>
    <property type="evidence" value="ECO:0007669"/>
    <property type="project" value="UniProtKB-UniRule"/>
</dbReference>
<dbReference type="GO" id="GO:0003735">
    <property type="term" value="F:structural constituent of ribosome"/>
    <property type="evidence" value="ECO:0007669"/>
    <property type="project" value="InterPro"/>
</dbReference>
<dbReference type="GO" id="GO:0000049">
    <property type="term" value="F:tRNA binding"/>
    <property type="evidence" value="ECO:0007669"/>
    <property type="project" value="UniProtKB-UniRule"/>
</dbReference>
<dbReference type="GO" id="GO:0006412">
    <property type="term" value="P:translation"/>
    <property type="evidence" value="ECO:0007669"/>
    <property type="project" value="UniProtKB-UniRule"/>
</dbReference>
<dbReference type="FunFam" id="1.10.8.50:FF:000001">
    <property type="entry name" value="30S ribosomal protein S13"/>
    <property type="match status" value="1"/>
</dbReference>
<dbReference type="FunFam" id="4.10.910.10:FF:000001">
    <property type="entry name" value="30S ribosomal protein S13"/>
    <property type="match status" value="1"/>
</dbReference>
<dbReference type="Gene3D" id="1.10.8.50">
    <property type="match status" value="1"/>
</dbReference>
<dbReference type="Gene3D" id="4.10.910.10">
    <property type="entry name" value="30s ribosomal protein s13, domain 2"/>
    <property type="match status" value="1"/>
</dbReference>
<dbReference type="HAMAP" id="MF_01315">
    <property type="entry name" value="Ribosomal_uS13"/>
    <property type="match status" value="1"/>
</dbReference>
<dbReference type="InterPro" id="IPR027437">
    <property type="entry name" value="Rbsml_uS13_C"/>
</dbReference>
<dbReference type="InterPro" id="IPR001892">
    <property type="entry name" value="Ribosomal_uS13"/>
</dbReference>
<dbReference type="InterPro" id="IPR010979">
    <property type="entry name" value="Ribosomal_uS13-like_H2TH"/>
</dbReference>
<dbReference type="InterPro" id="IPR019980">
    <property type="entry name" value="Ribosomal_uS13_bac-type"/>
</dbReference>
<dbReference type="InterPro" id="IPR018269">
    <property type="entry name" value="Ribosomal_uS13_CS"/>
</dbReference>
<dbReference type="NCBIfam" id="TIGR03631">
    <property type="entry name" value="uS13_bact"/>
    <property type="match status" value="1"/>
</dbReference>
<dbReference type="PANTHER" id="PTHR10871">
    <property type="entry name" value="30S RIBOSOMAL PROTEIN S13/40S RIBOSOMAL PROTEIN S18"/>
    <property type="match status" value="1"/>
</dbReference>
<dbReference type="PANTHER" id="PTHR10871:SF1">
    <property type="entry name" value="SMALL RIBOSOMAL SUBUNIT PROTEIN US13M"/>
    <property type="match status" value="1"/>
</dbReference>
<dbReference type="Pfam" id="PF00416">
    <property type="entry name" value="Ribosomal_S13"/>
    <property type="match status" value="1"/>
</dbReference>
<dbReference type="PIRSF" id="PIRSF002134">
    <property type="entry name" value="Ribosomal_S13"/>
    <property type="match status" value="1"/>
</dbReference>
<dbReference type="SUPFAM" id="SSF46946">
    <property type="entry name" value="S13-like H2TH domain"/>
    <property type="match status" value="1"/>
</dbReference>
<dbReference type="PROSITE" id="PS00646">
    <property type="entry name" value="RIBOSOMAL_S13_1"/>
    <property type="match status" value="1"/>
</dbReference>
<dbReference type="PROSITE" id="PS50159">
    <property type="entry name" value="RIBOSOMAL_S13_2"/>
    <property type="match status" value="1"/>
</dbReference>
<sequence length="127" mass="14866">MARIAGVDIPRNKKIEIAITYIYGIGRSNGMEILRKANVNPERRVRDLTEEEVGRIREIVDREYRVEGDLRREVQLNIKRLMDIGCYRGLRHRRGMPVRGQRTRTNARTRRGRRGQAIGIKKKATKK</sequence>
<proteinExistence type="inferred from homology"/>